<reference key="1">
    <citation type="submission" date="2007-09" db="EMBL/GenBank/DDBJ databases">
        <title>Complete sequence of chromosome of Serratia proteamaculans 568.</title>
        <authorList>
            <consortium name="US DOE Joint Genome Institute"/>
            <person name="Copeland A."/>
            <person name="Lucas S."/>
            <person name="Lapidus A."/>
            <person name="Barry K."/>
            <person name="Glavina del Rio T."/>
            <person name="Dalin E."/>
            <person name="Tice H."/>
            <person name="Pitluck S."/>
            <person name="Chain P."/>
            <person name="Malfatti S."/>
            <person name="Shin M."/>
            <person name="Vergez L."/>
            <person name="Schmutz J."/>
            <person name="Larimer F."/>
            <person name="Land M."/>
            <person name="Hauser L."/>
            <person name="Kyrpides N."/>
            <person name="Kim E."/>
            <person name="Taghavi S."/>
            <person name="Newman L."/>
            <person name="Vangronsveld J."/>
            <person name="van der Lelie D."/>
            <person name="Richardson P."/>
        </authorList>
    </citation>
    <scope>NUCLEOTIDE SEQUENCE [LARGE SCALE GENOMIC DNA]</scope>
    <source>
        <strain>568</strain>
    </source>
</reference>
<sequence>MKKGVLLNADVSAVVSRLGHTDQIVICDAGLPIPAATQRIDLALTQGVPTFLQVLGVVTQEMQVESAILAEEIVKQNPQLHRALLAQLTELGQHQGNTISVSYISHSAFKAQTEHSRAVIRSGECSPYANVILCAGVTF</sequence>
<dbReference type="EC" id="5.4.99.62" evidence="1"/>
<dbReference type="EMBL" id="CP000826">
    <property type="protein sequence ID" value="ABV43993.1"/>
    <property type="molecule type" value="Genomic_DNA"/>
</dbReference>
<dbReference type="SMR" id="A8GLK3"/>
<dbReference type="STRING" id="399741.Spro_4901"/>
<dbReference type="KEGG" id="spe:Spro_4901"/>
<dbReference type="eggNOG" id="COG1869">
    <property type="taxonomic scope" value="Bacteria"/>
</dbReference>
<dbReference type="HOGENOM" id="CLU_135498_0_0_6"/>
<dbReference type="OrthoDB" id="9805009at2"/>
<dbReference type="UniPathway" id="UPA00916">
    <property type="reaction ID" value="UER00888"/>
</dbReference>
<dbReference type="GO" id="GO:0005829">
    <property type="term" value="C:cytosol"/>
    <property type="evidence" value="ECO:0007669"/>
    <property type="project" value="TreeGrafter"/>
</dbReference>
<dbReference type="GO" id="GO:0062193">
    <property type="term" value="F:D-ribose pyranase activity"/>
    <property type="evidence" value="ECO:0007669"/>
    <property type="project" value="UniProtKB-EC"/>
</dbReference>
<dbReference type="GO" id="GO:0016872">
    <property type="term" value="F:intramolecular lyase activity"/>
    <property type="evidence" value="ECO:0007669"/>
    <property type="project" value="UniProtKB-UniRule"/>
</dbReference>
<dbReference type="GO" id="GO:0048029">
    <property type="term" value="F:monosaccharide binding"/>
    <property type="evidence" value="ECO:0007669"/>
    <property type="project" value="InterPro"/>
</dbReference>
<dbReference type="GO" id="GO:0019303">
    <property type="term" value="P:D-ribose catabolic process"/>
    <property type="evidence" value="ECO:0007669"/>
    <property type="project" value="UniProtKB-UniRule"/>
</dbReference>
<dbReference type="FunFam" id="3.40.1650.10:FF:000002">
    <property type="entry name" value="D-ribose pyranase"/>
    <property type="match status" value="1"/>
</dbReference>
<dbReference type="Gene3D" id="3.40.1650.10">
    <property type="entry name" value="RbsD-like domain"/>
    <property type="match status" value="1"/>
</dbReference>
<dbReference type="HAMAP" id="MF_01661">
    <property type="entry name" value="D_rib_pyranase"/>
    <property type="match status" value="1"/>
</dbReference>
<dbReference type="InterPro" id="IPR023064">
    <property type="entry name" value="D-ribose_pyranase"/>
</dbReference>
<dbReference type="InterPro" id="IPR023750">
    <property type="entry name" value="RbsD-like_sf"/>
</dbReference>
<dbReference type="InterPro" id="IPR007721">
    <property type="entry name" value="RbsD_FucU"/>
</dbReference>
<dbReference type="NCBIfam" id="NF008761">
    <property type="entry name" value="PRK11797.1"/>
    <property type="match status" value="1"/>
</dbReference>
<dbReference type="PANTHER" id="PTHR37831">
    <property type="entry name" value="D-RIBOSE PYRANASE"/>
    <property type="match status" value="1"/>
</dbReference>
<dbReference type="PANTHER" id="PTHR37831:SF1">
    <property type="entry name" value="D-RIBOSE PYRANASE"/>
    <property type="match status" value="1"/>
</dbReference>
<dbReference type="Pfam" id="PF05025">
    <property type="entry name" value="RbsD_FucU"/>
    <property type="match status" value="1"/>
</dbReference>
<dbReference type="SUPFAM" id="SSF102546">
    <property type="entry name" value="RbsD-like"/>
    <property type="match status" value="1"/>
</dbReference>
<comment type="function">
    <text evidence="1">Catalyzes the interconversion of beta-pyran and beta-furan forms of D-ribose.</text>
</comment>
<comment type="catalytic activity">
    <reaction evidence="1">
        <text>beta-D-ribopyranose = beta-D-ribofuranose</text>
        <dbReference type="Rhea" id="RHEA:25432"/>
        <dbReference type="ChEBI" id="CHEBI:27476"/>
        <dbReference type="ChEBI" id="CHEBI:47002"/>
        <dbReference type="EC" id="5.4.99.62"/>
    </reaction>
</comment>
<comment type="pathway">
    <text evidence="1">Carbohydrate metabolism; D-ribose degradation; D-ribose 5-phosphate from beta-D-ribopyranose: step 1/2.</text>
</comment>
<comment type="subunit">
    <text evidence="1">Homodecamer.</text>
</comment>
<comment type="subcellular location">
    <subcellularLocation>
        <location evidence="1">Cytoplasm</location>
    </subcellularLocation>
</comment>
<comment type="similarity">
    <text evidence="1">Belongs to the RbsD / FucU family. RbsD subfamily.</text>
</comment>
<organism>
    <name type="scientific">Serratia proteamaculans (strain 568)</name>
    <dbReference type="NCBI Taxonomy" id="399741"/>
    <lineage>
        <taxon>Bacteria</taxon>
        <taxon>Pseudomonadati</taxon>
        <taxon>Pseudomonadota</taxon>
        <taxon>Gammaproteobacteria</taxon>
        <taxon>Enterobacterales</taxon>
        <taxon>Yersiniaceae</taxon>
        <taxon>Serratia</taxon>
    </lineage>
</organism>
<name>RBSD_SERP5</name>
<feature type="chain" id="PRO_0000346254" description="D-ribose pyranase">
    <location>
        <begin position="1"/>
        <end position="139"/>
    </location>
</feature>
<feature type="active site" description="Proton donor" evidence="1">
    <location>
        <position position="20"/>
    </location>
</feature>
<feature type="binding site" evidence="1">
    <location>
        <position position="28"/>
    </location>
    <ligand>
        <name>substrate</name>
    </ligand>
</feature>
<feature type="binding site" evidence="1">
    <location>
        <position position="106"/>
    </location>
    <ligand>
        <name>substrate</name>
    </ligand>
</feature>
<feature type="binding site" evidence="1">
    <location>
        <begin position="128"/>
        <end position="130"/>
    </location>
    <ligand>
        <name>substrate</name>
    </ligand>
</feature>
<protein>
    <recommendedName>
        <fullName evidence="1">D-ribose pyranase</fullName>
        <ecNumber evidence="1">5.4.99.62</ecNumber>
    </recommendedName>
</protein>
<keyword id="KW-0119">Carbohydrate metabolism</keyword>
<keyword id="KW-0963">Cytoplasm</keyword>
<keyword id="KW-0413">Isomerase</keyword>
<gene>
    <name evidence="1" type="primary">rbsD</name>
    <name type="ordered locus">Spro_4901</name>
</gene>
<accession>A8GLK3</accession>
<proteinExistence type="inferred from homology"/>
<evidence type="ECO:0000255" key="1">
    <source>
        <dbReference type="HAMAP-Rule" id="MF_01661"/>
    </source>
</evidence>